<sequence length="17" mass="1829">GVLDAFRKIATVVKNVV</sequence>
<keyword id="KW-0027">Amidation</keyword>
<keyword id="KW-0878">Amphibian defense peptide</keyword>
<keyword id="KW-0044">Antibiotic</keyword>
<keyword id="KW-0929">Antimicrobial</keyword>
<keyword id="KW-0903">Direct protein sequencing</keyword>
<keyword id="KW-0964">Secreted</keyword>
<protein>
    <recommendedName>
        <fullName>Uperin-3.1</fullName>
    </recommendedName>
</protein>
<name>UPE31_UPEIN</name>
<comment type="function">
    <text>Shows a medium antibacterial activity against S.aureus and L.mesenteriodes.</text>
</comment>
<comment type="subcellular location">
    <subcellularLocation>
        <location>Secreted</location>
    </subcellularLocation>
</comment>
<comment type="tissue specificity">
    <text>Expressed by the skin dorsal glands.</text>
</comment>
<comment type="mass spectrometry" mass="1827.0" method="FAB" evidence="1"/>
<organism>
    <name type="scientific">Uperoleia inundata</name>
    <name type="common">Floodplain toadlet</name>
    <dbReference type="NCBI Taxonomy" id="104953"/>
    <lineage>
        <taxon>Eukaryota</taxon>
        <taxon>Metazoa</taxon>
        <taxon>Chordata</taxon>
        <taxon>Craniata</taxon>
        <taxon>Vertebrata</taxon>
        <taxon>Euteleostomi</taxon>
        <taxon>Amphibia</taxon>
        <taxon>Batrachia</taxon>
        <taxon>Anura</taxon>
        <taxon>Neobatrachia</taxon>
        <taxon>Myobatrachoidea</taxon>
        <taxon>Myobatrachidae</taxon>
        <taxon>Myobatrachinae</taxon>
        <taxon>Uperoleia</taxon>
    </lineage>
</organism>
<proteinExistence type="evidence at protein level"/>
<evidence type="ECO:0000269" key="1">
    <source ref="1"/>
</evidence>
<feature type="peptide" id="PRO_0000043854" description="Uperin-3.1">
    <location>
        <begin position="1"/>
        <end position="17"/>
    </location>
</feature>
<feature type="modified residue" description="Valine amide" evidence="1">
    <location>
        <position position="17"/>
    </location>
</feature>
<reference key="1">
    <citation type="journal article" date="1996" name="Aust. J. Chem.">
        <title>Novel uperin peptides from the dorsal glands of the australian floodplain toadlet Uperoleia inundata.</title>
        <authorList>
            <person name="Bradford A.M."/>
            <person name="Raftery M.J."/>
            <person name="Bowie J.H."/>
            <person name="Tyler M.J."/>
            <person name="Wallace J.C."/>
            <person name="Adams G.W."/>
            <person name="Severini C."/>
        </authorList>
    </citation>
    <scope>PROTEIN SEQUENCE</scope>
    <scope>AMIDATION AT VAL-17</scope>
    <scope>MASS SPECTROMETRY</scope>
    <source>
        <tissue>Skin secretion</tissue>
    </source>
</reference>
<accession>P82032</accession>
<dbReference type="GO" id="GO:0005576">
    <property type="term" value="C:extracellular region"/>
    <property type="evidence" value="ECO:0007669"/>
    <property type="project" value="UniProtKB-SubCell"/>
</dbReference>
<dbReference type="GO" id="GO:0042742">
    <property type="term" value="P:defense response to bacterium"/>
    <property type="evidence" value="ECO:0007669"/>
    <property type="project" value="UniProtKB-KW"/>
</dbReference>
<dbReference type="InterPro" id="IPR012527">
    <property type="entry name" value="Antimicrobial_8"/>
</dbReference>
<dbReference type="Pfam" id="PF08103">
    <property type="entry name" value="Antimicrobial_8"/>
    <property type="match status" value="1"/>
</dbReference>